<protein>
    <recommendedName>
        <fullName>Thiamine-phosphate synthase</fullName>
        <shortName>TP synthase</shortName>
        <shortName>TPS</shortName>
        <ecNumber evidence="3">2.5.1.3</ecNumber>
    </recommendedName>
    <alternativeName>
        <fullName>Thiamine-phosphate pyrophosphorylase</fullName>
        <shortName>TMP pyrophosphorylase</shortName>
        <shortName>TMP-PPase</shortName>
    </alternativeName>
</protein>
<sequence length="222" mass="23681">MTRISREMMKELLSVYFIMGSNNTKADPVTVVQKALKGGATLYQFREKGGDALTGEARIKFAEKAQAACREAGVPFIVNDDVELALNLKADGIHIGQEDANAKEVRAAIGDMILGVSAHTMSEVKQAEEDGADYVGLGPIYPTETKKDTRAVQGVSLIEAVRRQGISIPIVGIGGITIDNAAPVIQAGADGVSMISAISQAEDPESAARKFREEIQTYKTGR</sequence>
<comment type="function">
    <text evidence="2 3">Condenses 4-methyl-5-(beta-hydroxyethyl)thiazole monophosphate (THZ-P) and 2-methyl-4-amino-5-hydroxymethyl pyrimidine pyrophosphate (HMP-PP) to form thiamine monophosphate (TMP). Is also able to use the 2-methoxy analog MeO-HMP-PP, as substrate in vitro, but not the 2-trifluoromethyl analog CF(3)-HMP-PP.</text>
</comment>
<comment type="catalytic activity">
    <reaction evidence="3">
        <text>2-[(2R,5Z)-2-carboxy-4-methylthiazol-5(2H)-ylidene]ethyl phosphate + 4-amino-2-methyl-5-(diphosphooxymethyl)pyrimidine + 2 H(+) = thiamine phosphate + CO2 + diphosphate</text>
        <dbReference type="Rhea" id="RHEA:47844"/>
        <dbReference type="ChEBI" id="CHEBI:15378"/>
        <dbReference type="ChEBI" id="CHEBI:16526"/>
        <dbReference type="ChEBI" id="CHEBI:33019"/>
        <dbReference type="ChEBI" id="CHEBI:37575"/>
        <dbReference type="ChEBI" id="CHEBI:57841"/>
        <dbReference type="ChEBI" id="CHEBI:62899"/>
        <dbReference type="EC" id="2.5.1.3"/>
    </reaction>
</comment>
<comment type="catalytic activity">
    <reaction evidence="3">
        <text>2-(2-carboxy-4-methylthiazol-5-yl)ethyl phosphate + 4-amino-2-methyl-5-(diphosphooxymethyl)pyrimidine + 2 H(+) = thiamine phosphate + CO2 + diphosphate</text>
        <dbReference type="Rhea" id="RHEA:47848"/>
        <dbReference type="ChEBI" id="CHEBI:15378"/>
        <dbReference type="ChEBI" id="CHEBI:16526"/>
        <dbReference type="ChEBI" id="CHEBI:33019"/>
        <dbReference type="ChEBI" id="CHEBI:37575"/>
        <dbReference type="ChEBI" id="CHEBI:57841"/>
        <dbReference type="ChEBI" id="CHEBI:62890"/>
        <dbReference type="EC" id="2.5.1.3"/>
    </reaction>
</comment>
<comment type="catalytic activity">
    <reaction evidence="3">
        <text>4-methyl-5-(2-phosphooxyethyl)-thiazole + 4-amino-2-methyl-5-(diphosphooxymethyl)pyrimidine + H(+) = thiamine phosphate + diphosphate</text>
        <dbReference type="Rhea" id="RHEA:22328"/>
        <dbReference type="ChEBI" id="CHEBI:15378"/>
        <dbReference type="ChEBI" id="CHEBI:33019"/>
        <dbReference type="ChEBI" id="CHEBI:37575"/>
        <dbReference type="ChEBI" id="CHEBI:57841"/>
        <dbReference type="ChEBI" id="CHEBI:58296"/>
        <dbReference type="EC" id="2.5.1.3"/>
    </reaction>
</comment>
<comment type="cofactor">
    <cofactor evidence="3">
        <name>Mg(2+)</name>
        <dbReference type="ChEBI" id="CHEBI:18420"/>
    </cofactor>
    <text evidence="3">Binds 1 Mg(2+) ion per subunit.</text>
</comment>
<comment type="biophysicochemical properties">
    <kinetics>
        <KM evidence="3">0.7 uM for HMP-PP</KM>
        <KM evidence="3">1.2 uM for THZ-P</KM>
        <Vmax evidence="3">0.7 umol/min/mg enzyme</Vmax>
    </kinetics>
</comment>
<comment type="pathway">
    <text>Cofactor biosynthesis; thiamine diphosphate biosynthesis; thiamine phosphate from 4-amino-2-methyl-5-diphosphomethylpyrimidine and 4-methyl-5-(2-phosphoethyl)-thiazole: step 1/1.</text>
</comment>
<comment type="subunit">
    <text evidence="1">Monomer.</text>
</comment>
<comment type="induction">
    <text evidence="3">Is weakly repressed by THZ and not at all by thiamine.</text>
</comment>
<comment type="miscellaneous">
    <text>Thiamine phosphate synthase appears to proceed with a dissociative mechanism (SN1 like) in which the pyrimidine pyrophosphate dissociates to give a reactive pyrimidine intermediate which is then trapped by the thiazole moiety.</text>
</comment>
<comment type="similarity">
    <text evidence="4">Belongs to the thiamine-phosphate synthase family.</text>
</comment>
<evidence type="ECO:0000269" key="1">
    <source>
    </source>
</evidence>
<evidence type="ECO:0000269" key="2">
    <source>
    </source>
</evidence>
<evidence type="ECO:0000269" key="3">
    <source>
    </source>
</evidence>
<evidence type="ECO:0000305" key="4"/>
<evidence type="ECO:0007829" key="5">
    <source>
        <dbReference type="PDB" id="1G69"/>
    </source>
</evidence>
<evidence type="ECO:0007829" key="6">
    <source>
        <dbReference type="PDB" id="2TPS"/>
    </source>
</evidence>
<evidence type="ECO:0007829" key="7">
    <source>
        <dbReference type="PDB" id="3O16"/>
    </source>
</evidence>
<reference key="1">
    <citation type="journal article" date="1993" name="Mol. Microbiol.">
        <title>Bacillus subtilis genome project: cloning and sequencing of the 97 kb region from 325 degrees to 333 degrees.</title>
        <authorList>
            <person name="Glaser P."/>
            <person name="Kunst F."/>
            <person name="Arnaud M."/>
            <person name="Coudart M.P."/>
            <person name="Gonzales W."/>
            <person name="Hullo M.-F."/>
            <person name="Ionescu M."/>
            <person name="Lubochinsky B."/>
            <person name="Marcelino L."/>
            <person name="Moszer I."/>
            <person name="Presecan E."/>
            <person name="Santana M."/>
            <person name="Schneider E."/>
            <person name="Schweizer J."/>
            <person name="Vertes A."/>
            <person name="Rapoport G."/>
            <person name="Danchin A."/>
        </authorList>
    </citation>
    <scope>NUCLEOTIDE SEQUENCE [GENOMIC DNA]</scope>
    <source>
        <strain>168</strain>
    </source>
</reference>
<reference key="2">
    <citation type="journal article" date="1997" name="Nature">
        <title>The complete genome sequence of the Gram-positive bacterium Bacillus subtilis.</title>
        <authorList>
            <person name="Kunst F."/>
            <person name="Ogasawara N."/>
            <person name="Moszer I."/>
            <person name="Albertini A.M."/>
            <person name="Alloni G."/>
            <person name="Azevedo V."/>
            <person name="Bertero M.G."/>
            <person name="Bessieres P."/>
            <person name="Bolotin A."/>
            <person name="Borchert S."/>
            <person name="Borriss R."/>
            <person name="Boursier L."/>
            <person name="Brans A."/>
            <person name="Braun M."/>
            <person name="Brignell S.C."/>
            <person name="Bron S."/>
            <person name="Brouillet S."/>
            <person name="Bruschi C.V."/>
            <person name="Caldwell B."/>
            <person name="Capuano V."/>
            <person name="Carter N.M."/>
            <person name="Choi S.-K."/>
            <person name="Codani J.-J."/>
            <person name="Connerton I.F."/>
            <person name="Cummings N.J."/>
            <person name="Daniel R.A."/>
            <person name="Denizot F."/>
            <person name="Devine K.M."/>
            <person name="Duesterhoeft A."/>
            <person name="Ehrlich S.D."/>
            <person name="Emmerson P.T."/>
            <person name="Entian K.-D."/>
            <person name="Errington J."/>
            <person name="Fabret C."/>
            <person name="Ferrari E."/>
            <person name="Foulger D."/>
            <person name="Fritz C."/>
            <person name="Fujita M."/>
            <person name="Fujita Y."/>
            <person name="Fuma S."/>
            <person name="Galizzi A."/>
            <person name="Galleron N."/>
            <person name="Ghim S.-Y."/>
            <person name="Glaser P."/>
            <person name="Goffeau A."/>
            <person name="Golightly E.J."/>
            <person name="Grandi G."/>
            <person name="Guiseppi G."/>
            <person name="Guy B.J."/>
            <person name="Haga K."/>
            <person name="Haiech J."/>
            <person name="Harwood C.R."/>
            <person name="Henaut A."/>
            <person name="Hilbert H."/>
            <person name="Holsappel S."/>
            <person name="Hosono S."/>
            <person name="Hullo M.-F."/>
            <person name="Itaya M."/>
            <person name="Jones L.-M."/>
            <person name="Joris B."/>
            <person name="Karamata D."/>
            <person name="Kasahara Y."/>
            <person name="Klaerr-Blanchard M."/>
            <person name="Klein C."/>
            <person name="Kobayashi Y."/>
            <person name="Koetter P."/>
            <person name="Koningstein G."/>
            <person name="Krogh S."/>
            <person name="Kumano M."/>
            <person name="Kurita K."/>
            <person name="Lapidus A."/>
            <person name="Lardinois S."/>
            <person name="Lauber J."/>
            <person name="Lazarevic V."/>
            <person name="Lee S.-M."/>
            <person name="Levine A."/>
            <person name="Liu H."/>
            <person name="Masuda S."/>
            <person name="Mauel C."/>
            <person name="Medigue C."/>
            <person name="Medina N."/>
            <person name="Mellado R.P."/>
            <person name="Mizuno M."/>
            <person name="Moestl D."/>
            <person name="Nakai S."/>
            <person name="Noback M."/>
            <person name="Noone D."/>
            <person name="O'Reilly M."/>
            <person name="Ogawa K."/>
            <person name="Ogiwara A."/>
            <person name="Oudega B."/>
            <person name="Park S.-H."/>
            <person name="Parro V."/>
            <person name="Pohl T.M."/>
            <person name="Portetelle D."/>
            <person name="Porwollik S."/>
            <person name="Prescott A.M."/>
            <person name="Presecan E."/>
            <person name="Pujic P."/>
            <person name="Purnelle B."/>
            <person name="Rapoport G."/>
            <person name="Rey M."/>
            <person name="Reynolds S."/>
            <person name="Rieger M."/>
            <person name="Rivolta C."/>
            <person name="Rocha E."/>
            <person name="Roche B."/>
            <person name="Rose M."/>
            <person name="Sadaie Y."/>
            <person name="Sato T."/>
            <person name="Scanlan E."/>
            <person name="Schleich S."/>
            <person name="Schroeter R."/>
            <person name="Scoffone F."/>
            <person name="Sekiguchi J."/>
            <person name="Sekowska A."/>
            <person name="Seror S.J."/>
            <person name="Serror P."/>
            <person name="Shin B.-S."/>
            <person name="Soldo B."/>
            <person name="Sorokin A."/>
            <person name="Tacconi E."/>
            <person name="Takagi T."/>
            <person name="Takahashi H."/>
            <person name="Takemaru K."/>
            <person name="Takeuchi M."/>
            <person name="Tamakoshi A."/>
            <person name="Tanaka T."/>
            <person name="Terpstra P."/>
            <person name="Tognoni A."/>
            <person name="Tosato V."/>
            <person name="Uchiyama S."/>
            <person name="Vandenbol M."/>
            <person name="Vannier F."/>
            <person name="Vassarotti A."/>
            <person name="Viari A."/>
            <person name="Wambutt R."/>
            <person name="Wedler E."/>
            <person name="Wedler H."/>
            <person name="Weitzenegger T."/>
            <person name="Winters P."/>
            <person name="Wipat A."/>
            <person name="Yamamoto H."/>
            <person name="Yamane K."/>
            <person name="Yasumoto K."/>
            <person name="Yata K."/>
            <person name="Yoshida K."/>
            <person name="Yoshikawa H.-F."/>
            <person name="Zumstein E."/>
            <person name="Yoshikawa H."/>
            <person name="Danchin A."/>
        </authorList>
    </citation>
    <scope>NUCLEOTIDE SEQUENCE [LARGE SCALE GENOMIC DNA]</scope>
    <source>
        <strain>168</strain>
    </source>
</reference>
<reference key="3">
    <citation type="journal article" date="1997" name="J. Bacteriol.">
        <title>Characterization of the Bacillus subtilis thiC operon involved in thiamine biosynthesis.</title>
        <authorList>
            <person name="Zhang Y."/>
            <person name="Taylor S.V."/>
            <person name="Chiu H.-J."/>
            <person name="Begley T.P."/>
        </authorList>
    </citation>
    <scope>FUNCTION</scope>
    <scope>CATALYTIC ACTIVITY</scope>
    <scope>COFACTOR</scope>
    <scope>KINETIC PARAMETERS</scope>
    <scope>INDUCTION</scope>
    <source>
        <strain>168 / CU1065</strain>
    </source>
</reference>
<reference key="4">
    <citation type="journal article" date="2001" name="Biochemistry">
        <title>Mechanistic studies on thiamin phosphate synthase: evidence for a dissociative mechanism.</title>
        <authorList>
            <person name="Reddick J.J."/>
            <person name="Nicewonger R."/>
            <person name="Begley T.P."/>
        </authorList>
    </citation>
    <scope>FUNCTION</scope>
    <scope>SUBSTRATE SPECIFICITY</scope>
    <scope>MUTAGENESIS OF SER-117</scope>
    <scope>REACTION MECHANISM</scope>
    <source>
        <strain>168 / CU1065</strain>
    </source>
</reference>
<reference key="5">
    <citation type="journal article" date="1999" name="Biochemistry">
        <title>Crystal structure of thiamin phosphate synthase from Bacillus subtilis at 1.25 A resolution.</title>
        <authorList>
            <person name="Chiu H.-J."/>
            <person name="Reddick J.J."/>
            <person name="Begley T.P."/>
            <person name="Ealick S.E."/>
        </authorList>
    </citation>
    <scope>X-RAY CRYSTALLOGRAPHY (1.25 ANGSTROMS) IN COMPLEX WITH THIAMINE PHOSPHATE AND MAGNESIUM PYROPHOSPHATE</scope>
    <source>
        <strain>168 / CU1065</strain>
    </source>
</reference>
<reference key="6">
    <citation type="journal article" date="2001" name="Biochemistry">
        <title>Structural characterization of the enzyme-substrate, enzyme-intermediate, and enzyme-product complexes of thiamin phosphate synthase.</title>
        <authorList>
            <person name="Peapus D.H."/>
            <person name="Chiu H.J."/>
            <person name="Campobasso N."/>
            <person name="Reddick J.J."/>
            <person name="Begley T.P."/>
            <person name="Ealick S.E."/>
        </authorList>
    </citation>
    <scope>X-RAY CRYSTALLOGRAPHY (1.4 ANGSTROMS) OF WILD-TYPE AND MUTANT ALA-117 IN COMPLEXES WITH SUBSTRATE; PRODUCTS AND INTERMEDIATES</scope>
    <source>
        <strain>168 / CU1065</strain>
    </source>
</reference>
<reference key="7">
    <citation type="submission" date="2011-07" db="PDB data bank">
        <title>Crystal structure and kinetic characterization of Bacillus subtilis thiamin phosphate synthase with a carboxylated thiazole phosphate.</title>
        <authorList>
            <person name="McCulloch K.M."/>
            <person name="Hanes J.W."/>
            <person name="Abdelwahed S."/>
            <person name="Mahanta N."/>
            <person name="Hazra A."/>
            <person name="Ishida K."/>
            <person name="Begley T.P."/>
            <person name="Ealick S.E."/>
        </authorList>
    </citation>
    <scope>X-RAY CRYSTALLOGRAPHY (1.95 ANGSTROMS)</scope>
</reference>
<organism>
    <name type="scientific">Bacillus subtilis (strain 168)</name>
    <dbReference type="NCBI Taxonomy" id="224308"/>
    <lineage>
        <taxon>Bacteria</taxon>
        <taxon>Bacillati</taxon>
        <taxon>Bacillota</taxon>
        <taxon>Bacilli</taxon>
        <taxon>Bacillales</taxon>
        <taxon>Bacillaceae</taxon>
        <taxon>Bacillus</taxon>
    </lineage>
</organism>
<proteinExistence type="evidence at protein level"/>
<dbReference type="EC" id="2.5.1.3" evidence="3"/>
<dbReference type="EMBL" id="X73124">
    <property type="protein sequence ID" value="CAA51582.1"/>
    <property type="molecule type" value="Genomic_DNA"/>
</dbReference>
<dbReference type="EMBL" id="AL009126">
    <property type="protein sequence ID" value="CAB15855.1"/>
    <property type="molecule type" value="Genomic_DNA"/>
</dbReference>
<dbReference type="PIR" id="S39681">
    <property type="entry name" value="S39681"/>
</dbReference>
<dbReference type="RefSeq" id="NP_391708.1">
    <property type="nucleotide sequence ID" value="NC_000964.3"/>
</dbReference>
<dbReference type="RefSeq" id="WP_003244128.1">
    <property type="nucleotide sequence ID" value="NZ_OZ025638.1"/>
</dbReference>
<dbReference type="PDB" id="1G4E">
    <property type="method" value="X-ray"/>
    <property type="resolution" value="1.60 A"/>
    <property type="chains" value="A/B=1-222"/>
</dbReference>
<dbReference type="PDB" id="1G4P">
    <property type="method" value="X-ray"/>
    <property type="resolution" value="2.50 A"/>
    <property type="chains" value="A/B=1-222"/>
</dbReference>
<dbReference type="PDB" id="1G4S">
    <property type="method" value="X-ray"/>
    <property type="resolution" value="1.70 A"/>
    <property type="chains" value="A/B=1-222"/>
</dbReference>
<dbReference type="PDB" id="1G4T">
    <property type="method" value="X-ray"/>
    <property type="resolution" value="1.55 A"/>
    <property type="chains" value="A/B=1-222"/>
</dbReference>
<dbReference type="PDB" id="1G67">
    <property type="method" value="X-ray"/>
    <property type="resolution" value="1.40 A"/>
    <property type="chains" value="A/B=1-222"/>
</dbReference>
<dbReference type="PDB" id="1G69">
    <property type="method" value="X-ray"/>
    <property type="resolution" value="1.50 A"/>
    <property type="chains" value="A/B=1-222"/>
</dbReference>
<dbReference type="PDB" id="1G6C">
    <property type="method" value="X-ray"/>
    <property type="resolution" value="1.40 A"/>
    <property type="chains" value="A/B=1-222"/>
</dbReference>
<dbReference type="PDB" id="2TPS">
    <property type="method" value="X-ray"/>
    <property type="resolution" value="1.25 A"/>
    <property type="chains" value="A/B=1-222"/>
</dbReference>
<dbReference type="PDB" id="3O15">
    <property type="method" value="X-ray"/>
    <property type="resolution" value="1.95 A"/>
    <property type="chains" value="A=1-222"/>
</dbReference>
<dbReference type="PDB" id="3O16">
    <property type="method" value="X-ray"/>
    <property type="resolution" value="2.10 A"/>
    <property type="chains" value="A=1-222"/>
</dbReference>
<dbReference type="PDBsum" id="1G4E"/>
<dbReference type="PDBsum" id="1G4P"/>
<dbReference type="PDBsum" id="1G4S"/>
<dbReference type="PDBsum" id="1G4T"/>
<dbReference type="PDBsum" id="1G67"/>
<dbReference type="PDBsum" id="1G69"/>
<dbReference type="PDBsum" id="1G6C"/>
<dbReference type="PDBsum" id="2TPS"/>
<dbReference type="PDBsum" id="3O15"/>
<dbReference type="PDBsum" id="3O16"/>
<dbReference type="SMR" id="P39594"/>
<dbReference type="FunCoup" id="P39594">
    <property type="interactions" value="558"/>
</dbReference>
<dbReference type="STRING" id="224308.BSU38290"/>
<dbReference type="DrugBank" id="DB01788">
    <property type="generic name" value="2-methyl-5-methylidenepyrimidin-4-imine"/>
</dbReference>
<dbReference type="DrugBank" id="DB07782">
    <property type="generic name" value="4-AMINO-2-TRIFLUOROMETHYL-5-HYDROXYMETHYLPYRIMIDINE PYROPHOSPHATE"/>
</dbReference>
<dbReference type="DrugBank" id="DB02885">
    <property type="generic name" value="4-Imino-5-methidyl-2-trifluoromethylpyrimidine"/>
</dbReference>
<dbReference type="DrugBank" id="DB03145">
    <property type="generic name" value="4-Methyl-5-Hydroxyethylthiazole Phosphate"/>
</dbReference>
<dbReference type="DrugBank" id="DB03416">
    <property type="generic name" value="Thiamine(1+) monophosphate"/>
</dbReference>
<dbReference type="DrugBank" id="DB02254">
    <property type="generic name" value="Trifluoro-thiamin phosphate"/>
</dbReference>
<dbReference type="PaxDb" id="224308-BSU38290"/>
<dbReference type="EnsemblBacteria" id="CAB15855">
    <property type="protein sequence ID" value="CAB15855"/>
    <property type="gene ID" value="BSU_38290"/>
</dbReference>
<dbReference type="GeneID" id="937316"/>
<dbReference type="KEGG" id="bsu:BSU38290"/>
<dbReference type="PATRIC" id="fig|224308.179.peg.4145"/>
<dbReference type="eggNOG" id="COG0352">
    <property type="taxonomic scope" value="Bacteria"/>
</dbReference>
<dbReference type="InParanoid" id="P39594"/>
<dbReference type="OrthoDB" id="9812206at2"/>
<dbReference type="PhylomeDB" id="P39594"/>
<dbReference type="BioCyc" id="BSUB:BSU38290-MONOMER"/>
<dbReference type="BioCyc" id="MetaCyc:BSU38290-MONOMER"/>
<dbReference type="BRENDA" id="2.5.1.3">
    <property type="organism ID" value="658"/>
</dbReference>
<dbReference type="UniPathway" id="UPA00060">
    <property type="reaction ID" value="UER00141"/>
</dbReference>
<dbReference type="EvolutionaryTrace" id="P39594"/>
<dbReference type="Proteomes" id="UP000001570">
    <property type="component" value="Chromosome"/>
</dbReference>
<dbReference type="GO" id="GO:0005737">
    <property type="term" value="C:cytoplasm"/>
    <property type="evidence" value="ECO:0000318"/>
    <property type="project" value="GO_Central"/>
</dbReference>
<dbReference type="GO" id="GO:0000287">
    <property type="term" value="F:magnesium ion binding"/>
    <property type="evidence" value="ECO:0007669"/>
    <property type="project" value="UniProtKB-UniRule"/>
</dbReference>
<dbReference type="GO" id="GO:0004789">
    <property type="term" value="F:thiamine-phosphate diphosphorylase activity"/>
    <property type="evidence" value="ECO:0000318"/>
    <property type="project" value="GO_Central"/>
</dbReference>
<dbReference type="GO" id="GO:0009228">
    <property type="term" value="P:thiamine biosynthetic process"/>
    <property type="evidence" value="ECO:0000318"/>
    <property type="project" value="GO_Central"/>
</dbReference>
<dbReference type="GO" id="GO:0009229">
    <property type="term" value="P:thiamine diphosphate biosynthetic process"/>
    <property type="evidence" value="ECO:0007669"/>
    <property type="project" value="UniProtKB-UniRule"/>
</dbReference>
<dbReference type="CDD" id="cd00564">
    <property type="entry name" value="TMP_TenI"/>
    <property type="match status" value="1"/>
</dbReference>
<dbReference type="FunFam" id="3.20.20.70:FF:000096">
    <property type="entry name" value="Thiamine-phosphate synthase"/>
    <property type="match status" value="1"/>
</dbReference>
<dbReference type="Gene3D" id="3.20.20.70">
    <property type="entry name" value="Aldolase class I"/>
    <property type="match status" value="1"/>
</dbReference>
<dbReference type="HAMAP" id="MF_00097">
    <property type="entry name" value="TMP_synthase"/>
    <property type="match status" value="1"/>
</dbReference>
<dbReference type="InterPro" id="IPR013785">
    <property type="entry name" value="Aldolase_TIM"/>
</dbReference>
<dbReference type="InterPro" id="IPR036206">
    <property type="entry name" value="ThiamineP_synth_sf"/>
</dbReference>
<dbReference type="InterPro" id="IPR022998">
    <property type="entry name" value="ThiamineP_synth_TenI"/>
</dbReference>
<dbReference type="InterPro" id="IPR034291">
    <property type="entry name" value="TMP_synthase"/>
</dbReference>
<dbReference type="NCBIfam" id="TIGR00693">
    <property type="entry name" value="thiE"/>
    <property type="match status" value="1"/>
</dbReference>
<dbReference type="PANTHER" id="PTHR20857">
    <property type="entry name" value="THIAMINE-PHOSPHATE PYROPHOSPHORYLASE"/>
    <property type="match status" value="1"/>
</dbReference>
<dbReference type="PANTHER" id="PTHR20857:SF15">
    <property type="entry name" value="THIAMINE-PHOSPHATE SYNTHASE"/>
    <property type="match status" value="1"/>
</dbReference>
<dbReference type="Pfam" id="PF02581">
    <property type="entry name" value="TMP-TENI"/>
    <property type="match status" value="1"/>
</dbReference>
<dbReference type="SUPFAM" id="SSF51391">
    <property type="entry name" value="Thiamin phosphate synthase"/>
    <property type="match status" value="1"/>
</dbReference>
<gene>
    <name type="primary">thiE</name>
    <name type="synonym">thiC</name>
    <name type="synonym">ywbK</name>
    <name type="ordered locus">BSU38290</name>
    <name type="ORF">ipa-26d</name>
</gene>
<name>THIE_BACSU</name>
<keyword id="KW-0002">3D-structure</keyword>
<keyword id="KW-0460">Magnesium</keyword>
<keyword id="KW-0479">Metal-binding</keyword>
<keyword id="KW-1185">Reference proteome</keyword>
<keyword id="KW-0784">Thiamine biosynthesis</keyword>
<keyword id="KW-0808">Transferase</keyword>
<accession>P39594</accession>
<feature type="chain" id="PRO_0000156995" description="Thiamine-phosphate synthase">
    <location>
        <begin position="1"/>
        <end position="222"/>
    </location>
</feature>
<feature type="binding site">
    <location>
        <begin position="44"/>
        <end position="48"/>
    </location>
    <ligand>
        <name>4-amino-2-methyl-5-(diphosphooxymethyl)pyrimidine</name>
        <dbReference type="ChEBI" id="CHEBI:57841"/>
    </ligand>
</feature>
<feature type="binding site">
    <location>
        <position position="79"/>
    </location>
    <ligand>
        <name>4-amino-2-methyl-5-(diphosphooxymethyl)pyrimidine</name>
        <dbReference type="ChEBI" id="CHEBI:57841"/>
    </ligand>
</feature>
<feature type="binding site">
    <location>
        <position position="80"/>
    </location>
    <ligand>
        <name>Mg(2+)</name>
        <dbReference type="ChEBI" id="CHEBI:18420"/>
    </ligand>
</feature>
<feature type="binding site">
    <location>
        <position position="99"/>
    </location>
    <ligand>
        <name>Mg(2+)</name>
        <dbReference type="ChEBI" id="CHEBI:18420"/>
    </ligand>
</feature>
<feature type="binding site">
    <location>
        <position position="117"/>
    </location>
    <ligand>
        <name>4-amino-2-methyl-5-(diphosphooxymethyl)pyrimidine</name>
        <dbReference type="ChEBI" id="CHEBI:57841"/>
    </ligand>
</feature>
<feature type="binding site">
    <location>
        <begin position="143"/>
        <end position="145"/>
    </location>
    <ligand>
        <name>2-[(2R,5Z)-2-carboxy-4-methylthiazol-5(2H)-ylidene]ethyl phosphate</name>
        <dbReference type="ChEBI" id="CHEBI:62899"/>
    </ligand>
</feature>
<feature type="binding site">
    <location>
        <position position="146"/>
    </location>
    <ligand>
        <name>4-amino-2-methyl-5-(diphosphooxymethyl)pyrimidine</name>
        <dbReference type="ChEBI" id="CHEBI:57841"/>
    </ligand>
</feature>
<feature type="binding site">
    <location>
        <position position="175"/>
    </location>
    <ligand>
        <name>2-[(2R,5Z)-2-carboxy-4-methylthiazol-5(2H)-ylidene]ethyl phosphate</name>
        <dbReference type="ChEBI" id="CHEBI:62899"/>
    </ligand>
</feature>
<feature type="binding site">
    <location>
        <begin position="195"/>
        <end position="196"/>
    </location>
    <ligand>
        <name>2-[(2R,5Z)-2-carboxy-4-methylthiazol-5(2H)-ylidene]ethyl phosphate</name>
        <dbReference type="ChEBI" id="CHEBI:62899"/>
    </ligand>
</feature>
<feature type="mutagenesis site" description="8000-fold reduction in catalytic activity." evidence="2">
    <original>S</original>
    <variation>A</variation>
    <location>
        <position position="117"/>
    </location>
</feature>
<feature type="helix" evidence="6">
    <location>
        <begin position="6"/>
        <end position="12"/>
    </location>
</feature>
<feature type="strand" evidence="6">
    <location>
        <begin position="15"/>
        <end position="19"/>
    </location>
</feature>
<feature type="helix" evidence="6">
    <location>
        <begin position="21"/>
        <end position="23"/>
    </location>
</feature>
<feature type="helix" evidence="6">
    <location>
        <begin position="28"/>
        <end position="38"/>
    </location>
</feature>
<feature type="strand" evidence="6">
    <location>
        <begin position="41"/>
        <end position="45"/>
    </location>
</feature>
<feature type="helix" evidence="6">
    <location>
        <begin position="55"/>
        <end position="72"/>
    </location>
</feature>
<feature type="strand" evidence="6">
    <location>
        <begin position="76"/>
        <end position="80"/>
    </location>
</feature>
<feature type="helix" evidence="6">
    <location>
        <begin position="82"/>
        <end position="88"/>
    </location>
</feature>
<feature type="strand" evidence="6">
    <location>
        <begin position="91"/>
        <end position="95"/>
    </location>
</feature>
<feature type="strand" evidence="5">
    <location>
        <begin position="97"/>
        <end position="99"/>
    </location>
</feature>
<feature type="helix" evidence="6">
    <location>
        <begin position="102"/>
        <end position="109"/>
    </location>
</feature>
<feature type="strand" evidence="6">
    <location>
        <begin position="112"/>
        <end position="118"/>
    </location>
</feature>
<feature type="helix" evidence="6">
    <location>
        <begin position="121"/>
        <end position="130"/>
    </location>
</feature>
<feature type="strand" evidence="6">
    <location>
        <begin position="133"/>
        <end position="137"/>
    </location>
</feature>
<feature type="strand" evidence="6">
    <location>
        <begin position="145"/>
        <end position="148"/>
    </location>
</feature>
<feature type="helix" evidence="6">
    <location>
        <begin position="156"/>
        <end position="163"/>
    </location>
</feature>
<feature type="strand" evidence="6">
    <location>
        <begin position="170"/>
        <end position="175"/>
    </location>
</feature>
<feature type="turn" evidence="6">
    <location>
        <begin position="178"/>
        <end position="180"/>
    </location>
</feature>
<feature type="helix" evidence="6">
    <location>
        <begin position="182"/>
        <end position="186"/>
    </location>
</feature>
<feature type="strand" evidence="6">
    <location>
        <begin position="190"/>
        <end position="195"/>
    </location>
</feature>
<feature type="helix" evidence="6">
    <location>
        <begin position="196"/>
        <end position="199"/>
    </location>
</feature>
<feature type="strand" evidence="7">
    <location>
        <begin position="201"/>
        <end position="203"/>
    </location>
</feature>
<feature type="helix" evidence="6">
    <location>
        <begin position="204"/>
        <end position="221"/>
    </location>
</feature>